<evidence type="ECO:0000255" key="1">
    <source>
        <dbReference type="HAMAP-Rule" id="MF_01398"/>
    </source>
</evidence>
<evidence type="ECO:0000256" key="2">
    <source>
        <dbReference type="SAM" id="MobiDB-lite"/>
    </source>
</evidence>
<organism>
    <name type="scientific">Prochlorococcus marinus (strain MIT 9215)</name>
    <dbReference type="NCBI Taxonomy" id="93060"/>
    <lineage>
        <taxon>Bacteria</taxon>
        <taxon>Bacillati</taxon>
        <taxon>Cyanobacteriota</taxon>
        <taxon>Cyanophyceae</taxon>
        <taxon>Synechococcales</taxon>
        <taxon>Prochlorococcaceae</taxon>
        <taxon>Prochlorococcus</taxon>
    </lineage>
</organism>
<protein>
    <recommendedName>
        <fullName evidence="1">ATP synthase subunit b</fullName>
    </recommendedName>
    <alternativeName>
        <fullName evidence="1">ATP synthase F(0) sector subunit b</fullName>
    </alternativeName>
    <alternativeName>
        <fullName evidence="1">ATPase subunit I</fullName>
    </alternativeName>
    <alternativeName>
        <fullName evidence="1">F-type ATPase subunit b</fullName>
        <shortName evidence="1">F-ATPase subunit b</shortName>
    </alternativeName>
</protein>
<comment type="function">
    <text evidence="1">F(1)F(0) ATP synthase produces ATP from ADP in the presence of a proton or sodium gradient. F-type ATPases consist of two structural domains, F(1) containing the extramembraneous catalytic core and F(0) containing the membrane proton channel, linked together by a central stalk and a peripheral stalk. During catalysis, ATP synthesis in the catalytic domain of F(1) is coupled via a rotary mechanism of the central stalk subunits to proton translocation.</text>
</comment>
<comment type="function">
    <text evidence="1">Component of the F(0) channel, it forms part of the peripheral stalk, linking F(1) to F(0).</text>
</comment>
<comment type="subunit">
    <text evidence="1">F-type ATPases have 2 components, F(1) - the catalytic core - and F(0) - the membrane proton channel. F(1) has five subunits: alpha(3), beta(3), gamma(1), delta(1), epsilon(1). F(0) has four main subunits: a(1), b(1), b'(1) and c(10-14). The alpha and beta chains form an alternating ring which encloses part of the gamma chain. F(1) is attached to F(0) by a central stalk formed by the gamma and epsilon chains, while a peripheral stalk is formed by the delta, b and b' chains.</text>
</comment>
<comment type="subcellular location">
    <subcellularLocation>
        <location evidence="1">Cellular thylakoid membrane</location>
        <topology evidence="1">Single-pass membrane protein</topology>
    </subcellularLocation>
</comment>
<comment type="similarity">
    <text evidence="1">Belongs to the ATPase B chain family.</text>
</comment>
<dbReference type="EMBL" id="CP000825">
    <property type="protein sequence ID" value="ABV51334.1"/>
    <property type="molecule type" value="Genomic_DNA"/>
</dbReference>
<dbReference type="RefSeq" id="WP_012008355.1">
    <property type="nucleotide sequence ID" value="NC_009840.1"/>
</dbReference>
<dbReference type="SMR" id="A8G6V3"/>
<dbReference type="STRING" id="93060.P9215_17211"/>
<dbReference type="KEGG" id="pmh:P9215_17211"/>
<dbReference type="eggNOG" id="COG0711">
    <property type="taxonomic scope" value="Bacteria"/>
</dbReference>
<dbReference type="HOGENOM" id="CLU_079215_8_1_3"/>
<dbReference type="OrthoDB" id="461217at2"/>
<dbReference type="Proteomes" id="UP000002014">
    <property type="component" value="Chromosome"/>
</dbReference>
<dbReference type="GO" id="GO:0031676">
    <property type="term" value="C:plasma membrane-derived thylakoid membrane"/>
    <property type="evidence" value="ECO:0007669"/>
    <property type="project" value="UniProtKB-SubCell"/>
</dbReference>
<dbReference type="GO" id="GO:0045259">
    <property type="term" value="C:proton-transporting ATP synthase complex"/>
    <property type="evidence" value="ECO:0007669"/>
    <property type="project" value="UniProtKB-KW"/>
</dbReference>
<dbReference type="GO" id="GO:0046933">
    <property type="term" value="F:proton-transporting ATP synthase activity, rotational mechanism"/>
    <property type="evidence" value="ECO:0007669"/>
    <property type="project" value="UniProtKB-UniRule"/>
</dbReference>
<dbReference type="CDD" id="cd06503">
    <property type="entry name" value="ATP-synt_Fo_b"/>
    <property type="match status" value="1"/>
</dbReference>
<dbReference type="HAMAP" id="MF_01398">
    <property type="entry name" value="ATP_synth_b_bprime"/>
    <property type="match status" value="1"/>
</dbReference>
<dbReference type="InterPro" id="IPR002146">
    <property type="entry name" value="ATP_synth_b/b'su_bac/chlpt"/>
</dbReference>
<dbReference type="NCBIfam" id="NF005606">
    <property type="entry name" value="PRK07352.1"/>
    <property type="match status" value="1"/>
</dbReference>
<dbReference type="PANTHER" id="PTHR34264">
    <property type="entry name" value="ATP SYNTHASE SUBUNIT B, CHLOROPLASTIC"/>
    <property type="match status" value="1"/>
</dbReference>
<dbReference type="PANTHER" id="PTHR34264:SF3">
    <property type="entry name" value="ATP SYNTHASE SUBUNIT B, CHLOROPLASTIC"/>
    <property type="match status" value="1"/>
</dbReference>
<dbReference type="Pfam" id="PF00430">
    <property type="entry name" value="ATP-synt_B"/>
    <property type="match status" value="1"/>
</dbReference>
<gene>
    <name evidence="1" type="primary">atpF</name>
    <name type="ordered locus">P9215_17211</name>
</gene>
<proteinExistence type="inferred from homology"/>
<keyword id="KW-0066">ATP synthesis</keyword>
<keyword id="KW-0138">CF(0)</keyword>
<keyword id="KW-0375">Hydrogen ion transport</keyword>
<keyword id="KW-0406">Ion transport</keyword>
<keyword id="KW-0472">Membrane</keyword>
<keyword id="KW-0793">Thylakoid</keyword>
<keyword id="KW-0812">Transmembrane</keyword>
<keyword id="KW-1133">Transmembrane helix</keyword>
<keyword id="KW-0813">Transport</keyword>
<reference key="1">
    <citation type="journal article" date="2007" name="PLoS Genet.">
        <title>Patterns and implications of gene gain and loss in the evolution of Prochlorococcus.</title>
        <authorList>
            <person name="Kettler G.C."/>
            <person name="Martiny A.C."/>
            <person name="Huang K."/>
            <person name="Zucker J."/>
            <person name="Coleman M.L."/>
            <person name="Rodrigue S."/>
            <person name="Chen F."/>
            <person name="Lapidus A."/>
            <person name="Ferriera S."/>
            <person name="Johnson J."/>
            <person name="Steglich C."/>
            <person name="Church G.M."/>
            <person name="Richardson P."/>
            <person name="Chisholm S.W."/>
        </authorList>
    </citation>
    <scope>NUCLEOTIDE SEQUENCE [LARGE SCALE GENOMIC DNA]</scope>
    <source>
        <strain>MIT 9215</strain>
    </source>
</reference>
<name>ATPF_PROM2</name>
<accession>A8G6V3</accession>
<feature type="chain" id="PRO_0000368665" description="ATP synthase subunit b">
    <location>
        <begin position="1"/>
        <end position="170"/>
    </location>
</feature>
<feature type="transmembrane region" description="Helical" evidence="1">
    <location>
        <begin position="15"/>
        <end position="37"/>
    </location>
</feature>
<feature type="region of interest" description="Disordered" evidence="2">
    <location>
        <begin position="72"/>
        <end position="98"/>
    </location>
</feature>
<sequence length="170" mass="19234">MNFTLLATEGFGLNFNLFETNILNWAVVIFGLYKFLPSFLGKMLQKRREGILLELKDAEDRLLNATQALEKAKKDLSSAEEKASQIKADSLKRSESIRMESEKKAIEEMARIKQSAISDESSEASRAISQLRKEAIELAIKKALDSLPNRLDQTKQENLVTQSINNIEEN</sequence>